<keyword id="KW-0007">Acetylation</keyword>
<keyword id="KW-0041">Annexin</keyword>
<keyword id="KW-0106">Calcium</keyword>
<keyword id="KW-0111">Calcium/phospholipid-binding</keyword>
<keyword id="KW-0963">Cytoplasm</keyword>
<keyword id="KW-0903">Direct protein sequencing</keyword>
<keyword id="KW-0597">Phosphoprotein</keyword>
<keyword id="KW-1185">Reference proteome</keyword>
<keyword id="KW-0677">Repeat</keyword>
<sequence length="673" mass="75885">MAKIAQGAMYRGSVHDFPEFDANQDAEALYTAMKGFGSDKESILELITSRSNKQRQEICQNYKSLYGKDLIEDLKYELTGKFERLIVNLMRPLAYCDAKEIKDAISGVGTDEKCLIEILASRTNEQMHQLVAAYKDAYERDLESDIIGDTSGHFQKMLVVLLQGTRENDDVVSEDLVQQDVQDLYEAGELKWGTDEAQFIYILGNRSKQHLRLVFDEYLKTTGKPIEASIRGELSGDFEKLMLAVVKCIRSTPEYFAERLFKAMKGLGTRDNTLIRIMVSRSELDMLDIREIFRTKYEKSLYSMIKNDTSGEYKKALLKLCGGDDDAAGQFFPEAAQVAYQMWELSAVSRVELKGTVCAANDFNPDADAKALRKAMKGIGTDEATIIDIVTHRSNAQRQQIRQTFKSHFGRDLMADLKSEISGDLARLILGLMMPPAHYDAKQLKKAMEGAGTDEKTLIEILATRTNAEIRAINEAYKEDYHKSLEDALSSDTSGHFRRILISLATGNREEGGENRDQAQEDAQVAAEILEIADTPSGDKTSLETRFMTVLCTRSYPHLRRVFQEFIKKTNYDIEHVIKKEMSGDVKDAFVAIVQSVKNKPLFFADKLYKSMKGAGTDEKTLTRVMVSRSEIDLLNIRREFIEKYDKSLHQAIEGDTSGDFMKALLALCGGED</sequence>
<reference key="1">
    <citation type="journal article" date="1988" name="Eur. J. Biochem.">
        <title>Molecular cloning of murine p68, a Ca2+-binding protein of the lipocortin family.</title>
        <authorList>
            <person name="Moss S.E."/>
            <person name="Crompton M.R."/>
            <person name="Crumpton M.J."/>
        </authorList>
    </citation>
    <scope>NUCLEOTIDE SEQUENCE [MRNA]</scope>
    <source>
        <strain>BALB/cJ</strain>
    </source>
</reference>
<reference key="2">
    <citation type="journal article" date="2005" name="Science">
        <title>The transcriptional landscape of the mammalian genome.</title>
        <authorList>
            <person name="Carninci P."/>
            <person name="Kasukawa T."/>
            <person name="Katayama S."/>
            <person name="Gough J."/>
            <person name="Frith M.C."/>
            <person name="Maeda N."/>
            <person name="Oyama R."/>
            <person name="Ravasi T."/>
            <person name="Lenhard B."/>
            <person name="Wells C."/>
            <person name="Kodzius R."/>
            <person name="Shimokawa K."/>
            <person name="Bajic V.B."/>
            <person name="Brenner S.E."/>
            <person name="Batalov S."/>
            <person name="Forrest A.R."/>
            <person name="Zavolan M."/>
            <person name="Davis M.J."/>
            <person name="Wilming L.G."/>
            <person name="Aidinis V."/>
            <person name="Allen J.E."/>
            <person name="Ambesi-Impiombato A."/>
            <person name="Apweiler R."/>
            <person name="Aturaliya R.N."/>
            <person name="Bailey T.L."/>
            <person name="Bansal M."/>
            <person name="Baxter L."/>
            <person name="Beisel K.W."/>
            <person name="Bersano T."/>
            <person name="Bono H."/>
            <person name="Chalk A.M."/>
            <person name="Chiu K.P."/>
            <person name="Choudhary V."/>
            <person name="Christoffels A."/>
            <person name="Clutterbuck D.R."/>
            <person name="Crowe M.L."/>
            <person name="Dalla E."/>
            <person name="Dalrymple B.P."/>
            <person name="de Bono B."/>
            <person name="Della Gatta G."/>
            <person name="di Bernardo D."/>
            <person name="Down T."/>
            <person name="Engstrom P."/>
            <person name="Fagiolini M."/>
            <person name="Faulkner G."/>
            <person name="Fletcher C.F."/>
            <person name="Fukushima T."/>
            <person name="Furuno M."/>
            <person name="Futaki S."/>
            <person name="Gariboldi M."/>
            <person name="Georgii-Hemming P."/>
            <person name="Gingeras T.R."/>
            <person name="Gojobori T."/>
            <person name="Green R.E."/>
            <person name="Gustincich S."/>
            <person name="Harbers M."/>
            <person name="Hayashi Y."/>
            <person name="Hensch T.K."/>
            <person name="Hirokawa N."/>
            <person name="Hill D."/>
            <person name="Huminiecki L."/>
            <person name="Iacono M."/>
            <person name="Ikeo K."/>
            <person name="Iwama A."/>
            <person name="Ishikawa T."/>
            <person name="Jakt M."/>
            <person name="Kanapin A."/>
            <person name="Katoh M."/>
            <person name="Kawasawa Y."/>
            <person name="Kelso J."/>
            <person name="Kitamura H."/>
            <person name="Kitano H."/>
            <person name="Kollias G."/>
            <person name="Krishnan S.P."/>
            <person name="Kruger A."/>
            <person name="Kummerfeld S.K."/>
            <person name="Kurochkin I.V."/>
            <person name="Lareau L.F."/>
            <person name="Lazarevic D."/>
            <person name="Lipovich L."/>
            <person name="Liu J."/>
            <person name="Liuni S."/>
            <person name="McWilliam S."/>
            <person name="Madan Babu M."/>
            <person name="Madera M."/>
            <person name="Marchionni L."/>
            <person name="Matsuda H."/>
            <person name="Matsuzawa S."/>
            <person name="Miki H."/>
            <person name="Mignone F."/>
            <person name="Miyake S."/>
            <person name="Morris K."/>
            <person name="Mottagui-Tabar S."/>
            <person name="Mulder N."/>
            <person name="Nakano N."/>
            <person name="Nakauchi H."/>
            <person name="Ng P."/>
            <person name="Nilsson R."/>
            <person name="Nishiguchi S."/>
            <person name="Nishikawa S."/>
            <person name="Nori F."/>
            <person name="Ohara O."/>
            <person name="Okazaki Y."/>
            <person name="Orlando V."/>
            <person name="Pang K.C."/>
            <person name="Pavan W.J."/>
            <person name="Pavesi G."/>
            <person name="Pesole G."/>
            <person name="Petrovsky N."/>
            <person name="Piazza S."/>
            <person name="Reed J."/>
            <person name="Reid J.F."/>
            <person name="Ring B.Z."/>
            <person name="Ringwald M."/>
            <person name="Rost B."/>
            <person name="Ruan Y."/>
            <person name="Salzberg S.L."/>
            <person name="Sandelin A."/>
            <person name="Schneider C."/>
            <person name="Schoenbach C."/>
            <person name="Sekiguchi K."/>
            <person name="Semple C.A."/>
            <person name="Seno S."/>
            <person name="Sessa L."/>
            <person name="Sheng Y."/>
            <person name="Shibata Y."/>
            <person name="Shimada H."/>
            <person name="Shimada K."/>
            <person name="Silva D."/>
            <person name="Sinclair B."/>
            <person name="Sperling S."/>
            <person name="Stupka E."/>
            <person name="Sugiura K."/>
            <person name="Sultana R."/>
            <person name="Takenaka Y."/>
            <person name="Taki K."/>
            <person name="Tammoja K."/>
            <person name="Tan S.L."/>
            <person name="Tang S."/>
            <person name="Taylor M.S."/>
            <person name="Tegner J."/>
            <person name="Teichmann S.A."/>
            <person name="Ueda H.R."/>
            <person name="van Nimwegen E."/>
            <person name="Verardo R."/>
            <person name="Wei C.L."/>
            <person name="Yagi K."/>
            <person name="Yamanishi H."/>
            <person name="Zabarovsky E."/>
            <person name="Zhu S."/>
            <person name="Zimmer A."/>
            <person name="Hide W."/>
            <person name="Bult C."/>
            <person name="Grimmond S.M."/>
            <person name="Teasdale R.D."/>
            <person name="Liu E.T."/>
            <person name="Brusic V."/>
            <person name="Quackenbush J."/>
            <person name="Wahlestedt C."/>
            <person name="Mattick J.S."/>
            <person name="Hume D.A."/>
            <person name="Kai C."/>
            <person name="Sasaki D."/>
            <person name="Tomaru Y."/>
            <person name="Fukuda S."/>
            <person name="Kanamori-Katayama M."/>
            <person name="Suzuki M."/>
            <person name="Aoki J."/>
            <person name="Arakawa T."/>
            <person name="Iida J."/>
            <person name="Imamura K."/>
            <person name="Itoh M."/>
            <person name="Kato T."/>
            <person name="Kawaji H."/>
            <person name="Kawagashira N."/>
            <person name="Kawashima T."/>
            <person name="Kojima M."/>
            <person name="Kondo S."/>
            <person name="Konno H."/>
            <person name="Nakano K."/>
            <person name="Ninomiya N."/>
            <person name="Nishio T."/>
            <person name="Okada M."/>
            <person name="Plessy C."/>
            <person name="Shibata K."/>
            <person name="Shiraki T."/>
            <person name="Suzuki S."/>
            <person name="Tagami M."/>
            <person name="Waki K."/>
            <person name="Watahiki A."/>
            <person name="Okamura-Oho Y."/>
            <person name="Suzuki H."/>
            <person name="Kawai J."/>
            <person name="Hayashizaki Y."/>
        </authorList>
    </citation>
    <scope>NUCLEOTIDE SEQUENCE [LARGE SCALE MRNA]</scope>
    <source>
        <strain>C57BL/6J</strain>
        <tissue>Embryo</tissue>
        <tissue>Heart</tissue>
    </source>
</reference>
<reference key="3">
    <citation type="submission" date="2007-04" db="UniProtKB">
        <authorList>
            <person name="Lubec G."/>
            <person name="Kang S.U."/>
        </authorList>
    </citation>
    <scope>PROTEIN SEQUENCE OF 35-50; 69-81; 123-135; 282-290; 378-393; 457-465; 484-498; 500-509 AND 630-638</scope>
    <scope>IDENTIFICATION BY MASS SPECTROMETRY</scope>
    <source>
        <strain>C57BL/6J</strain>
        <tissue>Brain</tissue>
    </source>
</reference>
<reference key="4">
    <citation type="journal article" date="2007" name="J. Immunol.">
        <title>Quantitative time-resolved phosphoproteomic analysis of mast cell signaling.</title>
        <authorList>
            <person name="Cao L."/>
            <person name="Yu K."/>
            <person name="Banh C."/>
            <person name="Nguyen V."/>
            <person name="Ritz A."/>
            <person name="Raphael B.J."/>
            <person name="Kawakami Y."/>
            <person name="Kawakami T."/>
            <person name="Salomon A.R."/>
        </authorList>
    </citation>
    <scope>PHOSPHORYLATION [LARGE SCALE ANALYSIS] AT TYR-201</scope>
    <scope>IDENTIFICATION BY MASS SPECTROMETRY [LARGE SCALE ANALYSIS]</scope>
    <source>
        <tissue>Mast cell</tissue>
    </source>
</reference>
<reference key="5">
    <citation type="journal article" date="2008" name="J. Proteome Res.">
        <title>Large-scale identification and evolution indexing of tyrosine phosphorylation sites from murine brain.</title>
        <authorList>
            <person name="Ballif B.A."/>
            <person name="Carey G.R."/>
            <person name="Sunyaev S.R."/>
            <person name="Gygi S.P."/>
        </authorList>
    </citation>
    <scope>PHOSPHORYLATION [LARGE SCALE ANALYSIS] AT TYR-30</scope>
    <scope>IDENTIFICATION BY MASS SPECTROMETRY [LARGE SCALE ANALYSIS]</scope>
    <source>
        <tissue>Brain</tissue>
    </source>
</reference>
<reference key="6">
    <citation type="journal article" date="2010" name="Cell">
        <title>A tissue-specific atlas of mouse protein phosphorylation and expression.</title>
        <authorList>
            <person name="Huttlin E.L."/>
            <person name="Jedrychowski M.P."/>
            <person name="Elias J.E."/>
            <person name="Goswami T."/>
            <person name="Rad R."/>
            <person name="Beausoleil S.A."/>
            <person name="Villen J."/>
            <person name="Haas W."/>
            <person name="Sowa M.E."/>
            <person name="Gygi S.P."/>
        </authorList>
    </citation>
    <scope>IDENTIFICATION BY MASS SPECTROMETRY [LARGE SCALE ANALYSIS]</scope>
    <source>
        <tissue>Brain</tissue>
        <tissue>Brown adipose tissue</tissue>
        <tissue>Heart</tissue>
        <tissue>Kidney</tissue>
        <tissue>Liver</tissue>
        <tissue>Lung</tissue>
        <tissue>Pancreas</tissue>
        <tissue>Spleen</tissue>
        <tissue>Testis</tissue>
    </source>
</reference>
<reference key="7">
    <citation type="journal article" date="2013" name="Mol. Cell">
        <title>SIRT5-mediated lysine desuccinylation impacts diverse metabolic pathways.</title>
        <authorList>
            <person name="Park J."/>
            <person name="Chen Y."/>
            <person name="Tishkoff D.X."/>
            <person name="Peng C."/>
            <person name="Tan M."/>
            <person name="Dai L."/>
            <person name="Xie Z."/>
            <person name="Zhang Y."/>
            <person name="Zwaans B.M."/>
            <person name="Skinner M.E."/>
            <person name="Lombard D.B."/>
            <person name="Zhao Y."/>
        </authorList>
    </citation>
    <scope>ACETYLATION [LARGE SCALE ANALYSIS] AT LYS-620</scope>
    <scope>IDENTIFICATION BY MASS SPECTROMETRY [LARGE SCALE ANALYSIS]</scope>
    <source>
        <tissue>Embryonic fibroblast</tissue>
    </source>
</reference>
<evidence type="ECO:0000250" key="1"/>
<evidence type="ECO:0000250" key="2">
    <source>
        <dbReference type="UniProtKB" id="P08133"/>
    </source>
</evidence>
<evidence type="ECO:0000250" key="3">
    <source>
        <dbReference type="UniProtKB" id="P48037"/>
    </source>
</evidence>
<evidence type="ECO:0000255" key="4">
    <source>
        <dbReference type="PROSITE-ProRule" id="PRU01245"/>
    </source>
</evidence>
<evidence type="ECO:0000305" key="5"/>
<evidence type="ECO:0007744" key="6">
    <source>
    </source>
</evidence>
<evidence type="ECO:0007744" key="7">
    <source>
    </source>
</evidence>
<evidence type="ECO:0007744" key="8">
    <source>
    </source>
</evidence>
<name>ANXA6_MOUSE</name>
<proteinExistence type="evidence at protein level"/>
<dbReference type="EMBL" id="X13460">
    <property type="protein sequence ID" value="CAA31808.1"/>
    <property type="molecule type" value="mRNA"/>
</dbReference>
<dbReference type="EMBL" id="AK030728">
    <property type="protein sequence ID" value="BAC27101.1"/>
    <property type="molecule type" value="mRNA"/>
</dbReference>
<dbReference type="EMBL" id="AK146509">
    <property type="protein sequence ID" value="BAE27222.1"/>
    <property type="molecule type" value="mRNA"/>
</dbReference>
<dbReference type="EMBL" id="AK146592">
    <property type="protein sequence ID" value="BAE27287.1"/>
    <property type="molecule type" value="mRNA"/>
</dbReference>
<dbReference type="CCDS" id="CCDS24705.1"/>
<dbReference type="PIR" id="S01786">
    <property type="entry name" value="S01786"/>
</dbReference>
<dbReference type="RefSeq" id="NP_001103681.1">
    <property type="nucleotide sequence ID" value="NM_001110211.2"/>
</dbReference>
<dbReference type="RefSeq" id="NP_038500.2">
    <property type="nucleotide sequence ID" value="NM_013472.5"/>
</dbReference>
<dbReference type="SMR" id="P14824"/>
<dbReference type="BioGRID" id="198112">
    <property type="interactions" value="13"/>
</dbReference>
<dbReference type="FunCoup" id="P14824">
    <property type="interactions" value="761"/>
</dbReference>
<dbReference type="IntAct" id="P14824">
    <property type="interactions" value="3"/>
</dbReference>
<dbReference type="STRING" id="10090.ENSMUSP00000104511"/>
<dbReference type="GlyGen" id="P14824">
    <property type="glycosylation" value="2 sites, 1 O-linked glycan (2 sites)"/>
</dbReference>
<dbReference type="iPTMnet" id="P14824"/>
<dbReference type="MetOSite" id="P14824"/>
<dbReference type="PhosphoSitePlus" id="P14824"/>
<dbReference type="SwissPalm" id="P14824"/>
<dbReference type="jPOST" id="P14824"/>
<dbReference type="PaxDb" id="10090-ENSMUSP00000104511"/>
<dbReference type="PeptideAtlas" id="P14824"/>
<dbReference type="ProteomicsDB" id="296318"/>
<dbReference type="Antibodypedia" id="1185">
    <property type="antibodies" value="550 antibodies from 45 providers"/>
</dbReference>
<dbReference type="DNASU" id="11749"/>
<dbReference type="Ensembl" id="ENSMUST00000108883.10">
    <property type="protein sequence ID" value="ENSMUSP00000104511.4"/>
    <property type="gene ID" value="ENSMUSG00000018340.14"/>
</dbReference>
<dbReference type="GeneID" id="11749"/>
<dbReference type="KEGG" id="mmu:11749"/>
<dbReference type="UCSC" id="uc007iyr.2">
    <property type="organism name" value="mouse"/>
</dbReference>
<dbReference type="AGR" id="MGI:88255"/>
<dbReference type="CTD" id="309"/>
<dbReference type="MGI" id="MGI:88255">
    <property type="gene designation" value="Anxa6"/>
</dbReference>
<dbReference type="VEuPathDB" id="HostDB:ENSMUSG00000018340"/>
<dbReference type="eggNOG" id="KOG0819">
    <property type="taxonomic scope" value="Eukaryota"/>
</dbReference>
<dbReference type="GeneTree" id="ENSGT00940000158770"/>
<dbReference type="HOGENOM" id="CLU_017145_0_0_1"/>
<dbReference type="InParanoid" id="P14824"/>
<dbReference type="OMA" id="LMGKFER"/>
<dbReference type="OrthoDB" id="37886at2759"/>
<dbReference type="PhylomeDB" id="P14824"/>
<dbReference type="TreeFam" id="TF105452"/>
<dbReference type="BioGRID-ORCS" id="11749">
    <property type="hits" value="4 hits in 78 CRISPR screens"/>
</dbReference>
<dbReference type="ChiTaRS" id="Anxa6">
    <property type="organism name" value="mouse"/>
</dbReference>
<dbReference type="PRO" id="PR:P14824"/>
<dbReference type="Proteomes" id="UP000000589">
    <property type="component" value="Chromosome 11"/>
</dbReference>
<dbReference type="RNAct" id="P14824">
    <property type="molecule type" value="protein"/>
</dbReference>
<dbReference type="Bgee" id="ENSMUSG00000018340">
    <property type="expression patterns" value="Expressed in internal carotid artery and 268 other cell types or tissues"/>
</dbReference>
<dbReference type="ExpressionAtlas" id="P14824">
    <property type="expression patterns" value="baseline and differential"/>
</dbReference>
<dbReference type="GO" id="GO:0062023">
    <property type="term" value="C:collagen-containing extracellular matrix"/>
    <property type="evidence" value="ECO:0007005"/>
    <property type="project" value="BHF-UCL"/>
</dbReference>
<dbReference type="GO" id="GO:0005829">
    <property type="term" value="C:cytosol"/>
    <property type="evidence" value="ECO:0000304"/>
    <property type="project" value="Reactome"/>
</dbReference>
<dbReference type="GO" id="GO:0031902">
    <property type="term" value="C:late endosome membrane"/>
    <property type="evidence" value="ECO:0007669"/>
    <property type="project" value="Ensembl"/>
</dbReference>
<dbReference type="GO" id="GO:0005765">
    <property type="term" value="C:lysosomal membrane"/>
    <property type="evidence" value="ECO:0007669"/>
    <property type="project" value="Ensembl"/>
</dbReference>
<dbReference type="GO" id="GO:0042470">
    <property type="term" value="C:melanosome"/>
    <property type="evidence" value="ECO:0007669"/>
    <property type="project" value="UniProtKB-SubCell"/>
</dbReference>
<dbReference type="GO" id="GO:0016020">
    <property type="term" value="C:membrane"/>
    <property type="evidence" value="ECO:0000266"/>
    <property type="project" value="MGI"/>
</dbReference>
<dbReference type="GO" id="GO:0005739">
    <property type="term" value="C:mitochondrion"/>
    <property type="evidence" value="ECO:0007669"/>
    <property type="project" value="GOC"/>
</dbReference>
<dbReference type="GO" id="GO:0048471">
    <property type="term" value="C:perinuclear region of cytoplasm"/>
    <property type="evidence" value="ECO:0000314"/>
    <property type="project" value="MGI"/>
</dbReference>
<dbReference type="GO" id="GO:0005509">
    <property type="term" value="F:calcium ion binding"/>
    <property type="evidence" value="ECO:0007669"/>
    <property type="project" value="InterPro"/>
</dbReference>
<dbReference type="GO" id="GO:0005544">
    <property type="term" value="F:calcium-dependent phospholipid binding"/>
    <property type="evidence" value="ECO:0007669"/>
    <property type="project" value="UniProtKB-KW"/>
</dbReference>
<dbReference type="GO" id="GO:0048306">
    <property type="term" value="F:calcium-dependent protein binding"/>
    <property type="evidence" value="ECO:0007669"/>
    <property type="project" value="Ensembl"/>
</dbReference>
<dbReference type="GO" id="GO:0015485">
    <property type="term" value="F:cholesterol binding"/>
    <property type="evidence" value="ECO:0007669"/>
    <property type="project" value="Ensembl"/>
</dbReference>
<dbReference type="GO" id="GO:0005525">
    <property type="term" value="F:GTP binding"/>
    <property type="evidence" value="ECO:0007669"/>
    <property type="project" value="Ensembl"/>
</dbReference>
<dbReference type="GO" id="GO:0042802">
    <property type="term" value="F:identical protein binding"/>
    <property type="evidence" value="ECO:0007669"/>
    <property type="project" value="Ensembl"/>
</dbReference>
<dbReference type="GO" id="GO:0015276">
    <property type="term" value="F:ligand-gated monoatomic ion channel activity"/>
    <property type="evidence" value="ECO:0007669"/>
    <property type="project" value="Ensembl"/>
</dbReference>
<dbReference type="GO" id="GO:0097190">
    <property type="term" value="P:apoptotic signaling pathway"/>
    <property type="evidence" value="ECO:0000315"/>
    <property type="project" value="CACAO"/>
</dbReference>
<dbReference type="GO" id="GO:0006816">
    <property type="term" value="P:calcium ion transport"/>
    <property type="evidence" value="ECO:0000315"/>
    <property type="project" value="MGI"/>
</dbReference>
<dbReference type="GO" id="GO:0051560">
    <property type="term" value="P:mitochondrial calcium ion homeostasis"/>
    <property type="evidence" value="ECO:0000315"/>
    <property type="project" value="CACAO"/>
</dbReference>
<dbReference type="GO" id="GO:0006937">
    <property type="term" value="P:regulation of muscle contraction"/>
    <property type="evidence" value="ECO:0000315"/>
    <property type="project" value="MGI"/>
</dbReference>
<dbReference type="FunFam" id="1.10.220.10:FF:000001">
    <property type="entry name" value="Annexin"/>
    <property type="match status" value="2"/>
</dbReference>
<dbReference type="FunFam" id="1.10.220.10:FF:000002">
    <property type="entry name" value="Annexin"/>
    <property type="match status" value="1"/>
</dbReference>
<dbReference type="FunFam" id="1.10.220.10:FF:000003">
    <property type="entry name" value="Annexin"/>
    <property type="match status" value="2"/>
</dbReference>
<dbReference type="FunFam" id="1.10.220.10:FF:000004">
    <property type="entry name" value="Annexin"/>
    <property type="match status" value="1"/>
</dbReference>
<dbReference type="FunFam" id="1.10.220.10:FF:000005">
    <property type="entry name" value="Annexin"/>
    <property type="match status" value="1"/>
</dbReference>
<dbReference type="FunFam" id="1.10.220.10:FF:000013">
    <property type="entry name" value="Annexin"/>
    <property type="match status" value="1"/>
</dbReference>
<dbReference type="Gene3D" id="1.10.220.10">
    <property type="entry name" value="Annexin"/>
    <property type="match status" value="8"/>
</dbReference>
<dbReference type="InterPro" id="IPR001464">
    <property type="entry name" value="Annexin"/>
</dbReference>
<dbReference type="InterPro" id="IPR018502">
    <property type="entry name" value="Annexin_repeat"/>
</dbReference>
<dbReference type="InterPro" id="IPR018252">
    <property type="entry name" value="Annexin_repeat_CS"/>
</dbReference>
<dbReference type="InterPro" id="IPR037104">
    <property type="entry name" value="Annexin_sf"/>
</dbReference>
<dbReference type="InterPro" id="IPR002393">
    <property type="entry name" value="ANX6"/>
</dbReference>
<dbReference type="PANTHER" id="PTHR10502">
    <property type="entry name" value="ANNEXIN"/>
    <property type="match status" value="1"/>
</dbReference>
<dbReference type="PANTHER" id="PTHR10502:SF19">
    <property type="entry name" value="ANNEXIN A6"/>
    <property type="match status" value="1"/>
</dbReference>
<dbReference type="Pfam" id="PF00191">
    <property type="entry name" value="Annexin"/>
    <property type="match status" value="8"/>
</dbReference>
<dbReference type="PRINTS" id="PR00196">
    <property type="entry name" value="ANNEXIN"/>
</dbReference>
<dbReference type="PRINTS" id="PR00202">
    <property type="entry name" value="ANNEXINVI"/>
</dbReference>
<dbReference type="SMART" id="SM00335">
    <property type="entry name" value="ANX"/>
    <property type="match status" value="8"/>
</dbReference>
<dbReference type="SUPFAM" id="SSF47874">
    <property type="entry name" value="Annexin"/>
    <property type="match status" value="2"/>
</dbReference>
<dbReference type="PROSITE" id="PS00223">
    <property type="entry name" value="ANNEXIN_1"/>
    <property type="match status" value="8"/>
</dbReference>
<dbReference type="PROSITE" id="PS51897">
    <property type="entry name" value="ANNEXIN_2"/>
    <property type="match status" value="8"/>
</dbReference>
<comment type="function">
    <text>May associate with CD21. May regulate the release of Ca(2+) from intracellular stores.</text>
</comment>
<comment type="subcellular location">
    <subcellularLocation>
        <location evidence="1">Cytoplasm</location>
    </subcellularLocation>
    <subcellularLocation>
        <location evidence="1">Melanosome</location>
    </subcellularLocation>
</comment>
<comment type="domain">
    <text>A pair of annexin repeats may form one binding site for calcium and phospholipid.</text>
</comment>
<comment type="miscellaneous">
    <text>Seems to bind one calcium ion with high affinity.</text>
</comment>
<comment type="similarity">
    <text evidence="4 5">Belongs to the annexin family.</text>
</comment>
<accession>P14824</accession>
<accession>Q8BSS4</accession>
<gene>
    <name type="primary">Anxa6</name>
    <name type="synonym">Anx6</name>
</gene>
<organism>
    <name type="scientific">Mus musculus</name>
    <name type="common">Mouse</name>
    <dbReference type="NCBI Taxonomy" id="10090"/>
    <lineage>
        <taxon>Eukaryota</taxon>
        <taxon>Metazoa</taxon>
        <taxon>Chordata</taxon>
        <taxon>Craniata</taxon>
        <taxon>Vertebrata</taxon>
        <taxon>Euteleostomi</taxon>
        <taxon>Mammalia</taxon>
        <taxon>Eutheria</taxon>
        <taxon>Euarchontoglires</taxon>
        <taxon>Glires</taxon>
        <taxon>Rodentia</taxon>
        <taxon>Myomorpha</taxon>
        <taxon>Muroidea</taxon>
        <taxon>Muridae</taxon>
        <taxon>Murinae</taxon>
        <taxon>Mus</taxon>
        <taxon>Mus</taxon>
    </lineage>
</organism>
<protein>
    <recommendedName>
        <fullName>Annexin A6</fullName>
    </recommendedName>
    <alternativeName>
        <fullName>67 kDa calelectrin</fullName>
    </alternativeName>
    <alternativeName>
        <fullName>Annexin VI</fullName>
    </alternativeName>
    <alternativeName>
        <fullName>Annexin-6</fullName>
    </alternativeName>
    <alternativeName>
        <fullName>Calphobindin-II</fullName>
        <shortName>CPB-II</shortName>
    </alternativeName>
    <alternativeName>
        <fullName>Chromobindin-20</fullName>
    </alternativeName>
    <alternativeName>
        <fullName>Lipocortin VI</fullName>
    </alternativeName>
    <alternativeName>
        <fullName>Protein III</fullName>
    </alternativeName>
    <alternativeName>
        <fullName>p68</fullName>
    </alternativeName>
    <alternativeName>
        <fullName>p70</fullName>
    </alternativeName>
</protein>
<feature type="initiator methionine" description="Removed" evidence="2">
    <location>
        <position position="1"/>
    </location>
</feature>
<feature type="chain" id="PRO_0000067495" description="Annexin A6">
    <location>
        <begin position="2"/>
        <end position="673"/>
    </location>
</feature>
<feature type="repeat" description="Annexin 1" evidence="4">
    <location>
        <begin position="20"/>
        <end position="91"/>
    </location>
</feature>
<feature type="repeat" description="Annexin 2" evidence="4">
    <location>
        <begin position="92"/>
        <end position="163"/>
    </location>
</feature>
<feature type="repeat" description="Annexin 3" evidence="4">
    <location>
        <begin position="175"/>
        <end position="247"/>
    </location>
</feature>
<feature type="repeat" description="Annexin 4" evidence="4">
    <location>
        <begin position="251"/>
        <end position="322"/>
    </location>
</feature>
<feature type="repeat" description="Annexin 5" evidence="4">
    <location>
        <begin position="363"/>
        <end position="434"/>
    </location>
</feature>
<feature type="repeat" description="Annexin 6" evidence="4">
    <location>
        <begin position="435"/>
        <end position="506"/>
    </location>
</feature>
<feature type="repeat" description="Annexin 7" evidence="4">
    <location>
        <begin position="521"/>
        <end position="595"/>
    </location>
</feature>
<feature type="repeat" description="Annexin 8" evidence="4">
    <location>
        <begin position="599"/>
        <end position="670"/>
    </location>
</feature>
<feature type="modified residue" description="N-acetylalanine" evidence="2">
    <location>
        <position position="2"/>
    </location>
</feature>
<feature type="modified residue" description="Phosphoserine" evidence="2">
    <location>
        <position position="13"/>
    </location>
</feature>
<feature type="modified residue" description="Phosphotyrosine" evidence="7">
    <location>
        <position position="30"/>
    </location>
</feature>
<feature type="modified residue" description="N6-acetyllysine" evidence="2">
    <location>
        <position position="63"/>
    </location>
</feature>
<feature type="modified residue" description="N6-acetyllysine" evidence="2">
    <location>
        <position position="68"/>
    </location>
</feature>
<feature type="modified residue" description="N6-acetyllysine" evidence="2">
    <location>
        <position position="75"/>
    </location>
</feature>
<feature type="modified residue" description="N6-acetyllysine" evidence="2">
    <location>
        <position position="81"/>
    </location>
</feature>
<feature type="modified residue" description="Phosphotyrosine" evidence="6">
    <location>
        <position position="201"/>
    </location>
</feature>
<feature type="modified residue" description="N6-acetyllysine" evidence="2">
    <location>
        <position position="306"/>
    </location>
</feature>
<feature type="modified residue" description="N6-acetyllysine" evidence="2">
    <location>
        <position position="370"/>
    </location>
</feature>
<feature type="modified residue" description="N6-acetyllysine" evidence="2">
    <location>
        <position position="418"/>
    </location>
</feature>
<feature type="modified residue" description="Phosphoserine" evidence="3">
    <location>
        <position position="422"/>
    </location>
</feature>
<feature type="modified residue" description="N6-acetyllysine" evidence="2">
    <location>
        <position position="483"/>
    </location>
</feature>
<feature type="modified residue" description="Phosphoserine" evidence="2">
    <location>
        <position position="537"/>
    </location>
</feature>
<feature type="modified residue" description="N6-acetyllysine" evidence="8">
    <location>
        <position position="620"/>
    </location>
</feature>
<feature type="sequence conflict" description="In Ref. 1; CAA31808." evidence="5" ref="1">
    <original>N</original>
    <variation>S</variation>
    <location>
        <position position="61"/>
    </location>
</feature>
<feature type="sequence conflict" description="In Ref. 1; CAA31808." evidence="5" ref="1">
    <original>V</original>
    <variation>I</variation>
    <location>
        <position position="108"/>
    </location>
</feature>
<feature type="sequence conflict" description="In Ref. 1; CAA31808." evidence="5" ref="1">
    <original>G</original>
    <variation>A</variation>
    <location>
        <position position="329"/>
    </location>
</feature>